<proteinExistence type="inferred from homology"/>
<dbReference type="EMBL" id="AE005174">
    <property type="protein sequence ID" value="AAG56530.1"/>
    <property type="molecule type" value="Genomic_DNA"/>
</dbReference>
<dbReference type="EMBL" id="BA000007">
    <property type="protein sequence ID" value="BAB35279.1"/>
    <property type="molecule type" value="Genomic_DNA"/>
</dbReference>
<dbReference type="PIR" id="F85758">
    <property type="entry name" value="F85758"/>
</dbReference>
<dbReference type="PIR" id="H90860">
    <property type="entry name" value="H90860"/>
</dbReference>
<dbReference type="RefSeq" id="NP_309883.1">
    <property type="nucleotide sequence ID" value="NC_002695.1"/>
</dbReference>
<dbReference type="RefSeq" id="WP_000498253.1">
    <property type="nucleotide sequence ID" value="NZ_VOAI01000015.1"/>
</dbReference>
<dbReference type="STRING" id="155864.Z2523"/>
<dbReference type="GeneID" id="912802"/>
<dbReference type="GeneID" id="93775406"/>
<dbReference type="KEGG" id="ece:Z2523"/>
<dbReference type="KEGG" id="ecs:ECs_1856"/>
<dbReference type="PATRIC" id="fig|386585.9.peg.1956"/>
<dbReference type="eggNOG" id="ENOG5032SFP">
    <property type="taxonomic scope" value="Bacteria"/>
</dbReference>
<dbReference type="HOGENOM" id="CLU_158447_1_2_6"/>
<dbReference type="OMA" id="GVIGHET"/>
<dbReference type="Proteomes" id="UP000000558">
    <property type="component" value="Chromosome"/>
</dbReference>
<dbReference type="Proteomes" id="UP000002519">
    <property type="component" value="Chromosome"/>
</dbReference>
<dbReference type="GO" id="GO:0019867">
    <property type="term" value="C:outer membrane"/>
    <property type="evidence" value="ECO:0007669"/>
    <property type="project" value="InterPro"/>
</dbReference>
<dbReference type="GO" id="GO:0005886">
    <property type="term" value="C:plasma membrane"/>
    <property type="evidence" value="ECO:0007669"/>
    <property type="project" value="UniProtKB-SubCell"/>
</dbReference>
<dbReference type="InterPro" id="IPR008816">
    <property type="entry name" value="Gly_zipper_2TM_dom"/>
</dbReference>
<dbReference type="NCBIfam" id="NF007830">
    <property type="entry name" value="PRK10540.1"/>
    <property type="match status" value="1"/>
</dbReference>
<dbReference type="Pfam" id="PF05433">
    <property type="entry name" value="Rick_17kDa_Anti"/>
    <property type="match status" value="1"/>
</dbReference>
<dbReference type="PROSITE" id="PS51257">
    <property type="entry name" value="PROKAR_LIPOPROTEIN"/>
    <property type="match status" value="1"/>
</dbReference>
<comment type="function">
    <text evidence="1">Provides resistance to osmotic stress. May be important for stationary-phase survival (By similarity).</text>
</comment>
<comment type="subcellular location">
    <subcellularLocation>
        <location evidence="3">Cell membrane</location>
        <topology evidence="3">Lipid-anchor</topology>
    </subcellularLocation>
</comment>
<protein>
    <recommendedName>
        <fullName>Osmotically-inducible lipoprotein B</fullName>
    </recommendedName>
</protein>
<sequence length="72" mass="6948">MFVTSKKMTAAVLAITLAMSLSACSNWSKRDRNTAIGAGAGALGGAVLTDGSTLGTLGGAAVGGVIGHQVGK</sequence>
<keyword id="KW-1003">Cell membrane</keyword>
<keyword id="KW-0449">Lipoprotein</keyword>
<keyword id="KW-0472">Membrane</keyword>
<keyword id="KW-0564">Palmitate</keyword>
<keyword id="KW-1185">Reference proteome</keyword>
<keyword id="KW-0732">Signal</keyword>
<gene>
    <name type="primary">osmB</name>
    <name type="ordered locus">Z2523</name>
    <name type="ordered locus">ECs1856</name>
</gene>
<reference key="1">
    <citation type="journal article" date="2001" name="Nature">
        <title>Genome sequence of enterohaemorrhagic Escherichia coli O157:H7.</title>
        <authorList>
            <person name="Perna N.T."/>
            <person name="Plunkett G. III"/>
            <person name="Burland V."/>
            <person name="Mau B."/>
            <person name="Glasner J.D."/>
            <person name="Rose D.J."/>
            <person name="Mayhew G.F."/>
            <person name="Evans P.S."/>
            <person name="Gregor J."/>
            <person name="Kirkpatrick H.A."/>
            <person name="Posfai G."/>
            <person name="Hackett J."/>
            <person name="Klink S."/>
            <person name="Boutin A."/>
            <person name="Shao Y."/>
            <person name="Miller L."/>
            <person name="Grotbeck E.J."/>
            <person name="Davis N.W."/>
            <person name="Lim A."/>
            <person name="Dimalanta E.T."/>
            <person name="Potamousis K."/>
            <person name="Apodaca J."/>
            <person name="Anantharaman T.S."/>
            <person name="Lin J."/>
            <person name="Yen G."/>
            <person name="Schwartz D.C."/>
            <person name="Welch R.A."/>
            <person name="Blattner F.R."/>
        </authorList>
    </citation>
    <scope>NUCLEOTIDE SEQUENCE [LARGE SCALE GENOMIC DNA]</scope>
    <source>
        <strain>O157:H7 / EDL933 / ATCC 700927 / EHEC</strain>
    </source>
</reference>
<reference key="2">
    <citation type="journal article" date="2001" name="DNA Res.">
        <title>Complete genome sequence of enterohemorrhagic Escherichia coli O157:H7 and genomic comparison with a laboratory strain K-12.</title>
        <authorList>
            <person name="Hayashi T."/>
            <person name="Makino K."/>
            <person name="Ohnishi M."/>
            <person name="Kurokawa K."/>
            <person name="Ishii K."/>
            <person name="Yokoyama K."/>
            <person name="Han C.-G."/>
            <person name="Ohtsubo E."/>
            <person name="Nakayama K."/>
            <person name="Murata T."/>
            <person name="Tanaka M."/>
            <person name="Tobe T."/>
            <person name="Iida T."/>
            <person name="Takami H."/>
            <person name="Honda T."/>
            <person name="Sasakawa C."/>
            <person name="Ogasawara N."/>
            <person name="Yasunaga T."/>
            <person name="Kuhara S."/>
            <person name="Shiba T."/>
            <person name="Hattori M."/>
            <person name="Shinagawa H."/>
        </authorList>
    </citation>
    <scope>NUCLEOTIDE SEQUENCE [LARGE SCALE GENOMIC DNA]</scope>
    <source>
        <strain>O157:H7 / Sakai / RIMD 0509952 / EHEC</strain>
    </source>
</reference>
<name>OSMB_ECO57</name>
<organism>
    <name type="scientific">Escherichia coli O157:H7</name>
    <dbReference type="NCBI Taxonomy" id="83334"/>
    <lineage>
        <taxon>Bacteria</taxon>
        <taxon>Pseudomonadati</taxon>
        <taxon>Pseudomonadota</taxon>
        <taxon>Gammaproteobacteria</taxon>
        <taxon>Enterobacterales</taxon>
        <taxon>Enterobacteriaceae</taxon>
        <taxon>Escherichia</taxon>
    </lineage>
</organism>
<accession>P0ADA9</accession>
<accession>P17873</accession>
<evidence type="ECO:0000250" key="1"/>
<evidence type="ECO:0000255" key="2">
    <source>
        <dbReference type="PROSITE-ProRule" id="PRU00303"/>
    </source>
</evidence>
<evidence type="ECO:0000305" key="3"/>
<feature type="signal peptide" evidence="2">
    <location>
        <begin position="1"/>
        <end position="23"/>
    </location>
</feature>
<feature type="chain" id="PRO_0000043185" description="Osmotically-inducible lipoprotein B">
    <location>
        <begin position="24"/>
        <end position="72"/>
    </location>
</feature>
<feature type="lipid moiety-binding region" description="N-palmitoyl cysteine" evidence="3">
    <location>
        <position position="24"/>
    </location>
</feature>
<feature type="lipid moiety-binding region" description="S-diacylglycerol cysteine" evidence="3">
    <location>
        <position position="24"/>
    </location>
</feature>